<protein>
    <recommendedName>
        <fullName evidence="1">Medium/long-chain acyl-CoA thioesterase YigI</fullName>
        <ecNumber evidence="1">3.1.2.20</ecNumber>
    </recommendedName>
</protein>
<sequence>MSAVLTAEQALKLVGEMFVYHMPFNRALGLELERYEKAFAQLAFNNQPMMVGNWAQSILHGGVIASALDVAAGLVCVGSTLTRHETISEDELRQRLSRMGTIDLRVDYLRPGRGNRFTATSSLLRAGNKVAVARVELHNEDQLYIASATATYMVG</sequence>
<name>YIGI_SALTY</name>
<comment type="function">
    <text evidence="1">Displays thioesterase activity against medium- to long-chain acyl-CoA substrates (By similarity). Is involved in the thioesterase-dependent beta-oxidation pathway of (9Z,11E)-octadecadienoate (conjugated linoleic acid or CLA), along with TesB and FadM (By similarity).</text>
</comment>
<comment type="catalytic activity">
    <reaction evidence="1">
        <text>a fatty acyl-CoA + H2O = a fatty acid + CoA + H(+)</text>
        <dbReference type="Rhea" id="RHEA:16781"/>
        <dbReference type="ChEBI" id="CHEBI:15377"/>
        <dbReference type="ChEBI" id="CHEBI:15378"/>
        <dbReference type="ChEBI" id="CHEBI:28868"/>
        <dbReference type="ChEBI" id="CHEBI:57287"/>
        <dbReference type="ChEBI" id="CHEBI:77636"/>
        <dbReference type="EC" id="3.1.2.20"/>
    </reaction>
</comment>
<comment type="catalytic activity">
    <reaction evidence="1">
        <text>a medium-chain fatty acyl-CoA + H2O = a medium-chain fatty acid + CoA + H(+)</text>
        <dbReference type="Rhea" id="RHEA:68184"/>
        <dbReference type="ChEBI" id="CHEBI:15377"/>
        <dbReference type="ChEBI" id="CHEBI:15378"/>
        <dbReference type="ChEBI" id="CHEBI:57287"/>
        <dbReference type="ChEBI" id="CHEBI:59558"/>
        <dbReference type="ChEBI" id="CHEBI:90546"/>
    </reaction>
</comment>
<comment type="catalytic activity">
    <reaction evidence="1">
        <text>a long-chain fatty acyl-CoA + H2O = a long-chain fatty acid + CoA + H(+)</text>
        <dbReference type="Rhea" id="RHEA:67680"/>
        <dbReference type="ChEBI" id="CHEBI:15377"/>
        <dbReference type="ChEBI" id="CHEBI:15378"/>
        <dbReference type="ChEBI" id="CHEBI:57287"/>
        <dbReference type="ChEBI" id="CHEBI:57560"/>
        <dbReference type="ChEBI" id="CHEBI:83139"/>
    </reaction>
</comment>
<comment type="subcellular location">
    <subcellularLocation>
        <location evidence="1">Cytoplasm</location>
    </subcellularLocation>
</comment>
<comment type="similarity">
    <text evidence="2">Belongs to the YigI thioesterase family.</text>
</comment>
<comment type="sequence caution" evidence="2">
    <conflict type="erroneous initiation">
        <sequence resource="EMBL-CDS" id="AAL22800"/>
    </conflict>
</comment>
<gene>
    <name type="primary">yigI</name>
    <name type="ordered locus">STM3956</name>
    <name type="ORF">STMD1.34</name>
</gene>
<organism>
    <name type="scientific">Salmonella typhimurium (strain LT2 / SGSC1412 / ATCC 700720)</name>
    <dbReference type="NCBI Taxonomy" id="99287"/>
    <lineage>
        <taxon>Bacteria</taxon>
        <taxon>Pseudomonadati</taxon>
        <taxon>Pseudomonadota</taxon>
        <taxon>Gammaproteobacteria</taxon>
        <taxon>Enterobacterales</taxon>
        <taxon>Enterobacteriaceae</taxon>
        <taxon>Salmonella</taxon>
    </lineage>
</organism>
<evidence type="ECO:0000250" key="1">
    <source>
        <dbReference type="UniProtKB" id="P0ADP2"/>
    </source>
</evidence>
<evidence type="ECO:0000305" key="2"/>
<reference key="1">
    <citation type="journal article" date="2001" name="Nature">
        <title>Complete genome sequence of Salmonella enterica serovar Typhimurium LT2.</title>
        <authorList>
            <person name="McClelland M."/>
            <person name="Sanderson K.E."/>
            <person name="Spieth J."/>
            <person name="Clifton S.W."/>
            <person name="Latreille P."/>
            <person name="Courtney L."/>
            <person name="Porwollik S."/>
            <person name="Ali J."/>
            <person name="Dante M."/>
            <person name="Du F."/>
            <person name="Hou S."/>
            <person name="Layman D."/>
            <person name="Leonard S."/>
            <person name="Nguyen C."/>
            <person name="Scott K."/>
            <person name="Holmes A."/>
            <person name="Grewal N."/>
            <person name="Mulvaney E."/>
            <person name="Ryan E."/>
            <person name="Sun H."/>
            <person name="Florea L."/>
            <person name="Miller W."/>
            <person name="Stoneking T."/>
            <person name="Nhan M."/>
            <person name="Waterston R."/>
            <person name="Wilson R.K."/>
        </authorList>
    </citation>
    <scope>NUCLEOTIDE SEQUENCE [LARGE SCALE GENOMIC DNA]</scope>
    <source>
        <strain>LT2 / SGSC1412 / ATCC 700720</strain>
    </source>
</reference>
<reference key="2">
    <citation type="journal article" date="1994" name="J. Bacteriol.">
        <title>Molecular characterization of enterobacterial pldA genes encoding outer membrane phospholipase A.</title>
        <authorList>
            <person name="Brok R.G.P.M."/>
            <person name="Brinkman E."/>
            <person name="van Boxtel R."/>
            <person name="Bekkers A.C.A.P."/>
            <person name="Verheij H.M."/>
            <person name="Tommassen J."/>
        </authorList>
    </citation>
    <scope>NUCLEOTIDE SEQUENCE [GENOMIC DNA] OF 1-25</scope>
</reference>
<dbReference type="EC" id="3.1.2.20" evidence="1"/>
<dbReference type="EMBL" id="AF233324">
    <property type="protein sequence ID" value="AAF33436.1"/>
    <property type="molecule type" value="Genomic_DNA"/>
</dbReference>
<dbReference type="EMBL" id="AE006468">
    <property type="protein sequence ID" value="AAL22800.1"/>
    <property type="status" value="ALT_INIT"/>
    <property type="molecule type" value="Genomic_DNA"/>
</dbReference>
<dbReference type="EMBL" id="X76900">
    <property type="status" value="NOT_ANNOTATED_CDS"/>
    <property type="molecule type" value="Genomic_DNA"/>
</dbReference>
<dbReference type="RefSeq" id="NP_462841.3">
    <property type="nucleotide sequence ID" value="NC_003197.2"/>
</dbReference>
<dbReference type="RefSeq" id="WP_001594415.1">
    <property type="nucleotide sequence ID" value="NC_003197.2"/>
</dbReference>
<dbReference type="SMR" id="P0A1U0"/>
<dbReference type="STRING" id="99287.STM3956"/>
<dbReference type="PaxDb" id="99287-STM3956"/>
<dbReference type="GeneID" id="1255482"/>
<dbReference type="KEGG" id="stm:STM3956"/>
<dbReference type="PATRIC" id="fig|99287.12.peg.4174"/>
<dbReference type="HOGENOM" id="CLU_089876_7_2_6"/>
<dbReference type="OMA" id="RMGTIDM"/>
<dbReference type="PhylomeDB" id="P0A1U0"/>
<dbReference type="Proteomes" id="UP000001014">
    <property type="component" value="Chromosome"/>
</dbReference>
<dbReference type="GO" id="GO:0005737">
    <property type="term" value="C:cytoplasm"/>
    <property type="evidence" value="ECO:0007669"/>
    <property type="project" value="UniProtKB-SubCell"/>
</dbReference>
<dbReference type="GO" id="GO:0016289">
    <property type="term" value="F:acyl-CoA hydrolase activity"/>
    <property type="evidence" value="ECO:0007669"/>
    <property type="project" value="UniProtKB-ARBA"/>
</dbReference>
<dbReference type="GO" id="GO:0006629">
    <property type="term" value="P:lipid metabolic process"/>
    <property type="evidence" value="ECO:0007669"/>
    <property type="project" value="UniProtKB-KW"/>
</dbReference>
<dbReference type="CDD" id="cd03443">
    <property type="entry name" value="PaaI_thioesterase"/>
    <property type="match status" value="1"/>
</dbReference>
<dbReference type="FunFam" id="3.10.129.10:FF:000007">
    <property type="entry name" value="Thioesterase family protein"/>
    <property type="match status" value="1"/>
</dbReference>
<dbReference type="Gene3D" id="3.10.129.10">
    <property type="entry name" value="Hotdog Thioesterase"/>
    <property type="match status" value="1"/>
</dbReference>
<dbReference type="InterPro" id="IPR029069">
    <property type="entry name" value="HotDog_dom_sf"/>
</dbReference>
<dbReference type="InterPro" id="IPR003736">
    <property type="entry name" value="PAAI_dom"/>
</dbReference>
<dbReference type="InterPro" id="IPR006683">
    <property type="entry name" value="Thioestr_dom"/>
</dbReference>
<dbReference type="NCBIfam" id="NF008675">
    <property type="entry name" value="PRK11688.1"/>
    <property type="match status" value="1"/>
</dbReference>
<dbReference type="NCBIfam" id="TIGR00369">
    <property type="entry name" value="unchar_dom_1"/>
    <property type="match status" value="1"/>
</dbReference>
<dbReference type="PANTHER" id="PTHR43240">
    <property type="entry name" value="1,4-DIHYDROXY-2-NAPHTHOYL-COA THIOESTERASE 1"/>
    <property type="match status" value="1"/>
</dbReference>
<dbReference type="PANTHER" id="PTHR43240:SF20">
    <property type="entry name" value="MEDIUM_LONG-CHAIN ACYL-COA THIOESTERASE YIGI"/>
    <property type="match status" value="1"/>
</dbReference>
<dbReference type="Pfam" id="PF03061">
    <property type="entry name" value="4HBT"/>
    <property type="match status" value="1"/>
</dbReference>
<dbReference type="SUPFAM" id="SSF54637">
    <property type="entry name" value="Thioesterase/thiol ester dehydrase-isomerase"/>
    <property type="match status" value="1"/>
</dbReference>
<keyword id="KW-0963">Cytoplasm</keyword>
<keyword id="KW-0378">Hydrolase</keyword>
<keyword id="KW-0443">Lipid metabolism</keyword>
<keyword id="KW-1185">Reference proteome</keyword>
<feature type="chain" id="PRO_0000169661" description="Medium/long-chain acyl-CoA thioesterase YigI">
    <location>
        <begin position="1"/>
        <end position="155"/>
    </location>
</feature>
<proteinExistence type="inferred from homology"/>
<accession>P0A1U0</accession>
<accession>P40725</accession>
<accession>Q9L6P0</accession>